<proteinExistence type="inferred from homology"/>
<keyword id="KW-0456">Lyase</keyword>
<keyword id="KW-0663">Pyridoxal phosphate</keyword>
<keyword id="KW-0704">Schiff base</keyword>
<sequence>MEKSTWTTKVGLAQMLKGGVIMDVVTPEQARIAEEAGAVAVMALERVPADIRAQGGVARMSDPELILAIKQAVTIPVMAKARIGHFVEAQVLEAIGVDYIDESEVLTPADEEHHINKHKFRVPFVCGCRNLGEALRRVAEGAAMLRTKGEAGTGNVVEAVRHARAVYSEIRRLQSMNEDELFTYAKQIQAPYELVKQVATEGKLPVVNFAAGGIATPADAALLMQLGVDGIFVGSGIFKSGDPVKRARAIVEATTHYNDPEIIAEVSKGLGEAMVGINIDQIPADQLMARRGW</sequence>
<accession>B9LIK3</accession>
<evidence type="ECO:0000255" key="1">
    <source>
        <dbReference type="HAMAP-Rule" id="MF_01824"/>
    </source>
</evidence>
<gene>
    <name evidence="1" type="primary">pdxS</name>
    <name type="ordered locus">Chy400_2403</name>
</gene>
<comment type="function">
    <text evidence="1">Catalyzes the formation of pyridoxal 5'-phosphate from ribose 5-phosphate (RBP), glyceraldehyde 3-phosphate (G3P) and ammonia. The ammonia is provided by the PdxT subunit. Can also use ribulose 5-phosphate and dihydroxyacetone phosphate as substrates, resulting from enzyme-catalyzed isomerization of RBP and G3P, respectively.</text>
</comment>
<comment type="catalytic activity">
    <reaction evidence="1">
        <text>aldehydo-D-ribose 5-phosphate + D-glyceraldehyde 3-phosphate + L-glutamine = pyridoxal 5'-phosphate + L-glutamate + phosphate + 3 H2O + H(+)</text>
        <dbReference type="Rhea" id="RHEA:31507"/>
        <dbReference type="ChEBI" id="CHEBI:15377"/>
        <dbReference type="ChEBI" id="CHEBI:15378"/>
        <dbReference type="ChEBI" id="CHEBI:29985"/>
        <dbReference type="ChEBI" id="CHEBI:43474"/>
        <dbReference type="ChEBI" id="CHEBI:58273"/>
        <dbReference type="ChEBI" id="CHEBI:58359"/>
        <dbReference type="ChEBI" id="CHEBI:59776"/>
        <dbReference type="ChEBI" id="CHEBI:597326"/>
        <dbReference type="EC" id="4.3.3.6"/>
    </reaction>
</comment>
<comment type="pathway">
    <text evidence="1">Cofactor biosynthesis; pyridoxal 5'-phosphate biosynthesis.</text>
</comment>
<comment type="subunit">
    <text evidence="1">In the presence of PdxT, forms a dodecamer of heterodimers.</text>
</comment>
<comment type="similarity">
    <text evidence="1">Belongs to the PdxS/SNZ family.</text>
</comment>
<feature type="chain" id="PRO_1000188217" description="Pyridoxal 5'-phosphate synthase subunit PdxS">
    <location>
        <begin position="1"/>
        <end position="293"/>
    </location>
</feature>
<feature type="active site" description="Schiff-base intermediate with D-ribose 5-phosphate" evidence="1">
    <location>
        <position position="80"/>
    </location>
</feature>
<feature type="binding site" evidence="1">
    <location>
        <position position="23"/>
    </location>
    <ligand>
        <name>D-ribose 5-phosphate</name>
        <dbReference type="ChEBI" id="CHEBI:78346"/>
    </ligand>
</feature>
<feature type="binding site" evidence="1">
    <location>
        <position position="152"/>
    </location>
    <ligand>
        <name>D-ribose 5-phosphate</name>
        <dbReference type="ChEBI" id="CHEBI:78346"/>
    </ligand>
</feature>
<feature type="binding site" evidence="1">
    <location>
        <position position="164"/>
    </location>
    <ligand>
        <name>D-glyceraldehyde 3-phosphate</name>
        <dbReference type="ChEBI" id="CHEBI:59776"/>
    </ligand>
</feature>
<feature type="binding site" evidence="1">
    <location>
        <position position="213"/>
    </location>
    <ligand>
        <name>D-ribose 5-phosphate</name>
        <dbReference type="ChEBI" id="CHEBI:78346"/>
    </ligand>
</feature>
<feature type="binding site" evidence="1">
    <location>
        <begin position="234"/>
        <end position="235"/>
    </location>
    <ligand>
        <name>D-ribose 5-phosphate</name>
        <dbReference type="ChEBI" id="CHEBI:78346"/>
    </ligand>
</feature>
<organism>
    <name type="scientific">Chloroflexus aurantiacus (strain ATCC 29364 / DSM 637 / Y-400-fl)</name>
    <dbReference type="NCBI Taxonomy" id="480224"/>
    <lineage>
        <taxon>Bacteria</taxon>
        <taxon>Bacillati</taxon>
        <taxon>Chloroflexota</taxon>
        <taxon>Chloroflexia</taxon>
        <taxon>Chloroflexales</taxon>
        <taxon>Chloroflexineae</taxon>
        <taxon>Chloroflexaceae</taxon>
        <taxon>Chloroflexus</taxon>
    </lineage>
</organism>
<reference key="1">
    <citation type="submission" date="2009-01" db="EMBL/GenBank/DDBJ databases">
        <title>Complete sequence of Chloroflexus sp. Y-400-fl.</title>
        <authorList>
            <consortium name="US DOE Joint Genome Institute"/>
            <person name="Lucas S."/>
            <person name="Copeland A."/>
            <person name="Lapidus A."/>
            <person name="Glavina del Rio T."/>
            <person name="Dalin E."/>
            <person name="Tice H."/>
            <person name="Bruce D."/>
            <person name="Goodwin L."/>
            <person name="Pitluck S."/>
            <person name="Sims D."/>
            <person name="Kiss H."/>
            <person name="Brettin T."/>
            <person name="Detter J.C."/>
            <person name="Han C."/>
            <person name="Larimer F."/>
            <person name="Land M."/>
            <person name="Hauser L."/>
            <person name="Kyrpides N."/>
            <person name="Ovchinnikova G."/>
            <person name="Bryant D.A."/>
            <person name="Richardson P."/>
        </authorList>
    </citation>
    <scope>NUCLEOTIDE SEQUENCE [LARGE SCALE GENOMIC DNA]</scope>
    <source>
        <strain>ATCC 29364 / DSM 637 / Y-400-fl</strain>
    </source>
</reference>
<name>PDXS_CHLSY</name>
<dbReference type="EC" id="4.3.3.6" evidence="1"/>
<dbReference type="EMBL" id="CP001364">
    <property type="protein sequence ID" value="ACM53797.1"/>
    <property type="molecule type" value="Genomic_DNA"/>
</dbReference>
<dbReference type="SMR" id="B9LIK3"/>
<dbReference type="KEGG" id="chl:Chy400_2403"/>
<dbReference type="HOGENOM" id="CLU_055352_1_0_0"/>
<dbReference type="OrthoDB" id="9772545at2"/>
<dbReference type="UniPathway" id="UPA00245"/>
<dbReference type="GO" id="GO:0036381">
    <property type="term" value="F:pyridoxal 5'-phosphate synthase (glutamine hydrolysing) activity"/>
    <property type="evidence" value="ECO:0007669"/>
    <property type="project" value="UniProtKB-UniRule"/>
</dbReference>
<dbReference type="GO" id="GO:0006520">
    <property type="term" value="P:amino acid metabolic process"/>
    <property type="evidence" value="ECO:0007669"/>
    <property type="project" value="TreeGrafter"/>
</dbReference>
<dbReference type="GO" id="GO:0042823">
    <property type="term" value="P:pyridoxal phosphate biosynthetic process"/>
    <property type="evidence" value="ECO:0007669"/>
    <property type="project" value="UniProtKB-UniRule"/>
</dbReference>
<dbReference type="GO" id="GO:0008615">
    <property type="term" value="P:pyridoxine biosynthetic process"/>
    <property type="evidence" value="ECO:0007669"/>
    <property type="project" value="TreeGrafter"/>
</dbReference>
<dbReference type="CDD" id="cd04727">
    <property type="entry name" value="pdxS"/>
    <property type="match status" value="1"/>
</dbReference>
<dbReference type="FunFam" id="3.20.20.70:FF:000001">
    <property type="entry name" value="Pyridoxine biosynthesis protein PDX1"/>
    <property type="match status" value="1"/>
</dbReference>
<dbReference type="Gene3D" id="3.20.20.70">
    <property type="entry name" value="Aldolase class I"/>
    <property type="match status" value="1"/>
</dbReference>
<dbReference type="HAMAP" id="MF_01824">
    <property type="entry name" value="PdxS"/>
    <property type="match status" value="1"/>
</dbReference>
<dbReference type="InterPro" id="IPR013785">
    <property type="entry name" value="Aldolase_TIM"/>
</dbReference>
<dbReference type="InterPro" id="IPR001852">
    <property type="entry name" value="PdxS/SNZ"/>
</dbReference>
<dbReference type="InterPro" id="IPR033755">
    <property type="entry name" value="PdxS/SNZ_N"/>
</dbReference>
<dbReference type="InterPro" id="IPR011060">
    <property type="entry name" value="RibuloseP-bd_barrel"/>
</dbReference>
<dbReference type="NCBIfam" id="NF003215">
    <property type="entry name" value="PRK04180.1"/>
    <property type="match status" value="1"/>
</dbReference>
<dbReference type="NCBIfam" id="TIGR00343">
    <property type="entry name" value="pyridoxal 5'-phosphate synthase lyase subunit PdxS"/>
    <property type="match status" value="1"/>
</dbReference>
<dbReference type="PANTHER" id="PTHR31829">
    <property type="entry name" value="PYRIDOXAL 5'-PHOSPHATE SYNTHASE SUBUNIT SNZ1-RELATED"/>
    <property type="match status" value="1"/>
</dbReference>
<dbReference type="PANTHER" id="PTHR31829:SF0">
    <property type="entry name" value="PYRIDOXAL 5'-PHOSPHATE SYNTHASE SUBUNIT SNZ1-RELATED"/>
    <property type="match status" value="1"/>
</dbReference>
<dbReference type="Pfam" id="PF01680">
    <property type="entry name" value="SOR_SNZ"/>
    <property type="match status" value="1"/>
</dbReference>
<dbReference type="PIRSF" id="PIRSF029271">
    <property type="entry name" value="Pdx1"/>
    <property type="match status" value="1"/>
</dbReference>
<dbReference type="SUPFAM" id="SSF51366">
    <property type="entry name" value="Ribulose-phoshate binding barrel"/>
    <property type="match status" value="1"/>
</dbReference>
<dbReference type="PROSITE" id="PS01235">
    <property type="entry name" value="PDXS_SNZ_1"/>
    <property type="match status" value="1"/>
</dbReference>
<dbReference type="PROSITE" id="PS51129">
    <property type="entry name" value="PDXS_SNZ_2"/>
    <property type="match status" value="1"/>
</dbReference>
<protein>
    <recommendedName>
        <fullName evidence="1">Pyridoxal 5'-phosphate synthase subunit PdxS</fullName>
        <shortName evidence="1">PLP synthase subunit PdxS</shortName>
        <ecNumber evidence="1">4.3.3.6</ecNumber>
    </recommendedName>
    <alternativeName>
        <fullName evidence="1">Pdx1</fullName>
    </alternativeName>
</protein>